<dbReference type="EMBL" id="X76980">
    <property type="protein sequence ID" value="CAA54287.1"/>
    <property type="molecule type" value="mRNA"/>
</dbReference>
<dbReference type="EMBL" id="AB042117">
    <property type="protein sequence ID" value="BAA94967.1"/>
    <property type="molecule type" value="mRNA"/>
</dbReference>
<dbReference type="EMBL" id="BT029899">
    <property type="protein sequence ID" value="ABM06145.1"/>
    <property type="molecule type" value="mRNA"/>
</dbReference>
<dbReference type="EMBL" id="BC109963">
    <property type="protein sequence ID" value="AAI09964.1"/>
    <property type="molecule type" value="mRNA"/>
</dbReference>
<dbReference type="PIR" id="I46019">
    <property type="entry name" value="I46019"/>
</dbReference>
<dbReference type="RefSeq" id="NP_788846.1">
    <property type="nucleotide sequence ID" value="NM_176673.1"/>
</dbReference>
<dbReference type="PDB" id="3MKR">
    <property type="method" value="X-ray"/>
    <property type="resolution" value="2.60 A"/>
    <property type="chains" value="A=17-307"/>
</dbReference>
<dbReference type="PDBsum" id="3MKR"/>
<dbReference type="SMR" id="Q28104"/>
<dbReference type="FunCoup" id="Q28104">
    <property type="interactions" value="3492"/>
</dbReference>
<dbReference type="IntAct" id="Q28104">
    <property type="interactions" value="1"/>
</dbReference>
<dbReference type="STRING" id="9913.ENSBTAP00000001071"/>
<dbReference type="PaxDb" id="9913-ENSBTAP00000001071"/>
<dbReference type="PeptideAtlas" id="Q28104"/>
<dbReference type="Ensembl" id="ENSBTAT00000001071.7">
    <property type="protein sequence ID" value="ENSBTAP00000001071.5"/>
    <property type="gene ID" value="ENSBTAG00000000810.7"/>
</dbReference>
<dbReference type="GeneID" id="338085"/>
<dbReference type="KEGG" id="bta:338085"/>
<dbReference type="CTD" id="11316"/>
<dbReference type="VEuPathDB" id="HostDB:ENSBTAG00000000810"/>
<dbReference type="VGNC" id="VGNC:27595">
    <property type="gene designation" value="COPE"/>
</dbReference>
<dbReference type="eggNOG" id="KOG3081">
    <property type="taxonomic scope" value="Eukaryota"/>
</dbReference>
<dbReference type="GeneTree" id="ENSGT00390000003478"/>
<dbReference type="HOGENOM" id="CLU_049363_0_0_1"/>
<dbReference type="InParanoid" id="Q28104"/>
<dbReference type="OMA" id="MIVLSQH"/>
<dbReference type="OrthoDB" id="310217at2759"/>
<dbReference type="TreeFam" id="TF313390"/>
<dbReference type="Reactome" id="R-BTA-6807878">
    <property type="pathway name" value="COPI-mediated anterograde transport"/>
</dbReference>
<dbReference type="Reactome" id="R-BTA-6811434">
    <property type="pathway name" value="COPI-dependent Golgi-to-ER retrograde traffic"/>
</dbReference>
<dbReference type="EvolutionaryTrace" id="Q28104"/>
<dbReference type="Proteomes" id="UP000009136">
    <property type="component" value="Chromosome 7"/>
</dbReference>
<dbReference type="Bgee" id="ENSBTAG00000000810">
    <property type="expression patterns" value="Expressed in ascending colon and 108 other cell types or tissues"/>
</dbReference>
<dbReference type="GO" id="GO:0030126">
    <property type="term" value="C:COPI vesicle coat"/>
    <property type="evidence" value="ECO:0000314"/>
    <property type="project" value="UniProtKB"/>
</dbReference>
<dbReference type="GO" id="GO:0000139">
    <property type="term" value="C:Golgi membrane"/>
    <property type="evidence" value="ECO:0007669"/>
    <property type="project" value="UniProtKB-SubCell"/>
</dbReference>
<dbReference type="GO" id="GO:0005654">
    <property type="term" value="C:nucleoplasm"/>
    <property type="evidence" value="ECO:0007669"/>
    <property type="project" value="Ensembl"/>
</dbReference>
<dbReference type="GO" id="GO:0005198">
    <property type="term" value="F:structural molecule activity"/>
    <property type="evidence" value="ECO:0007669"/>
    <property type="project" value="InterPro"/>
</dbReference>
<dbReference type="GO" id="GO:0006888">
    <property type="term" value="P:endoplasmic reticulum to Golgi vesicle-mediated transport"/>
    <property type="evidence" value="ECO:0000318"/>
    <property type="project" value="GO_Central"/>
</dbReference>
<dbReference type="GO" id="GO:0006891">
    <property type="term" value="P:intra-Golgi vesicle-mediated transport"/>
    <property type="evidence" value="ECO:0000314"/>
    <property type="project" value="UniProtKB"/>
</dbReference>
<dbReference type="GO" id="GO:0099612">
    <property type="term" value="P:protein localization to axon"/>
    <property type="evidence" value="ECO:0007669"/>
    <property type="project" value="Ensembl"/>
</dbReference>
<dbReference type="GO" id="GO:0015031">
    <property type="term" value="P:protein transport"/>
    <property type="evidence" value="ECO:0007669"/>
    <property type="project" value="UniProtKB-KW"/>
</dbReference>
<dbReference type="GO" id="GO:0006890">
    <property type="term" value="P:retrograde vesicle-mediated transport, Golgi to endoplasmic reticulum"/>
    <property type="evidence" value="ECO:0000304"/>
    <property type="project" value="UniProtKB"/>
</dbReference>
<dbReference type="FunFam" id="1.25.40.10:FF:000148">
    <property type="entry name" value="Coatomer subunit epsilon"/>
    <property type="match status" value="1"/>
</dbReference>
<dbReference type="Gene3D" id="1.25.40.10">
    <property type="entry name" value="Tetratricopeptide repeat domain"/>
    <property type="match status" value="1"/>
</dbReference>
<dbReference type="InterPro" id="IPR006822">
    <property type="entry name" value="Coatomer_esu"/>
</dbReference>
<dbReference type="InterPro" id="IPR011990">
    <property type="entry name" value="TPR-like_helical_dom_sf"/>
</dbReference>
<dbReference type="PANTHER" id="PTHR10805">
    <property type="entry name" value="COATOMER SUBUNIT EPSILON"/>
    <property type="match status" value="1"/>
</dbReference>
<dbReference type="PANTHER" id="PTHR10805:SF0">
    <property type="entry name" value="COATOMER SUBUNIT EPSILON"/>
    <property type="match status" value="1"/>
</dbReference>
<dbReference type="Pfam" id="PF04733">
    <property type="entry name" value="Coatomer_E"/>
    <property type="match status" value="1"/>
</dbReference>
<dbReference type="PIRSF" id="PIRSF016478">
    <property type="entry name" value="Coatomer_esu"/>
    <property type="match status" value="1"/>
</dbReference>
<dbReference type="SUPFAM" id="SSF48452">
    <property type="entry name" value="TPR-like"/>
    <property type="match status" value="1"/>
</dbReference>
<proteinExistence type="evidence at protein level"/>
<name>COPE_BOVIN</name>
<protein>
    <recommendedName>
        <fullName>Coatomer subunit epsilon</fullName>
    </recommendedName>
    <alternativeName>
        <fullName>Epsilon-coat protein</fullName>
        <shortName>Epsilon-COP</shortName>
    </alternativeName>
</protein>
<accession>Q28104</accession>
<accession>A1L5B2</accession>
<accession>Q2TBL7</accession>
<accession>Q9N286</accession>
<feature type="chain" id="PRO_0000193849" description="Coatomer subunit epsilon">
    <location>
        <begin position="1"/>
        <end position="308"/>
    </location>
</feature>
<feature type="modified residue" description="Phosphoserine" evidence="2">
    <location>
        <position position="13"/>
    </location>
</feature>
<feature type="modified residue" description="Phosphoserine" evidence="2">
    <location>
        <position position="45"/>
    </location>
</feature>
<feature type="sequence conflict" description="In Ref. 1; CAA54287." evidence="3" ref="1">
    <original>D</original>
    <variation>H</variation>
    <location>
        <position position="94"/>
    </location>
</feature>
<feature type="sequence conflict" description="In Ref. 4; AAI09964." evidence="3" ref="4">
    <original>T</original>
    <variation>N</variation>
    <location>
        <position position="118"/>
    </location>
</feature>
<feature type="helix" evidence="4">
    <location>
        <begin position="20"/>
        <end position="27"/>
    </location>
</feature>
<feature type="helix" evidence="4">
    <location>
        <begin position="31"/>
        <end position="40"/>
    </location>
</feature>
<feature type="helix" evidence="4">
    <location>
        <begin position="46"/>
        <end position="62"/>
    </location>
</feature>
<feature type="helix" evidence="4">
    <location>
        <begin position="66"/>
        <end position="72"/>
    </location>
</feature>
<feature type="helix" evidence="4">
    <location>
        <begin position="79"/>
        <end position="92"/>
    </location>
</feature>
<feature type="helix" evidence="4">
    <location>
        <begin position="97"/>
        <end position="109"/>
    </location>
</feature>
<feature type="helix" evidence="4">
    <location>
        <begin position="117"/>
        <end position="129"/>
    </location>
</feature>
<feature type="helix" evidence="4">
    <location>
        <begin position="133"/>
        <end position="140"/>
    </location>
</feature>
<feature type="helix" evidence="4">
    <location>
        <begin position="146"/>
        <end position="158"/>
    </location>
</feature>
<feature type="helix" evidence="4">
    <location>
        <begin position="162"/>
        <end position="175"/>
    </location>
</feature>
<feature type="helix" evidence="4">
    <location>
        <begin position="180"/>
        <end position="193"/>
    </location>
</feature>
<feature type="helix" evidence="4">
    <location>
        <begin position="197"/>
        <end position="211"/>
    </location>
</feature>
<feature type="helix" evidence="4">
    <location>
        <begin position="216"/>
        <end position="228"/>
    </location>
</feature>
<feature type="helix" evidence="4">
    <location>
        <begin position="232"/>
        <end position="245"/>
    </location>
</feature>
<feature type="helix" evidence="4">
    <location>
        <begin position="250"/>
        <end position="262"/>
    </location>
</feature>
<feature type="helix" evidence="4">
    <location>
        <begin position="267"/>
        <end position="280"/>
    </location>
</feature>
<feature type="helix" evidence="4">
    <location>
        <begin position="285"/>
        <end position="304"/>
    </location>
</feature>
<comment type="function">
    <text evidence="1">The coatomer is a cytosolic protein complex that binds to dilysine motifs and reversibly associates with Golgi non-clathrin-coated vesicles, which further mediate biosynthetic protein transport from the ER, via the Golgi up to the trans Golgi network. The coatomer complex is required for budding from Golgi membranes, and is essential for the retrograde Golgi-to-ER transport of dilysine-tagged proteins. In mammals, the coatomer can only be recruited by membranes associated with ADP-ribosylation factors (ARFs), which are small GTP-binding proteins; the complex also influences the Golgi structural integrity, as well as the processing, activity, and endocytic recycling of LDL receptors (By similarity).</text>
</comment>
<comment type="subunit">
    <text>Oligomeric complex that consists of at least the alpha, beta, beta', gamma, delta, epsilon and zeta subunits.</text>
</comment>
<comment type="interaction">
    <interactant intactId="EBI-620457">
        <id>Q28104</id>
    </interactant>
    <interactant intactId="EBI-620400">
        <id>Q27954</id>
        <label>COPA</label>
    </interactant>
    <organismsDiffer>false</organismsDiffer>
    <experiments>5</experiments>
</comment>
<comment type="subcellular location">
    <subcellularLocation>
        <location evidence="1">Cytoplasm</location>
    </subcellularLocation>
    <subcellularLocation>
        <location evidence="1">Golgi apparatus membrane</location>
        <topology evidence="1">Peripheral membrane protein</topology>
        <orientation evidence="1">Cytoplasmic side</orientation>
    </subcellularLocation>
    <subcellularLocation>
        <location evidence="1">Cytoplasmic vesicle</location>
        <location evidence="1">COPI-coated vesicle membrane</location>
        <topology evidence="1">Peripheral membrane protein</topology>
        <orientation evidence="1">Cytoplasmic side</orientation>
    </subcellularLocation>
    <text evidence="1">The coatomer is cytoplasmic or polymerized on the cytoplasmic side of the Golgi, as well as on the vesicles/buds originating from it.</text>
</comment>
<comment type="PTM">
    <text evidence="1">Polyubiquitinated by RCHY1 in the presence of androgen, leading to proteasomal degradation.</text>
</comment>
<comment type="similarity">
    <text evidence="3">Belongs to the COPE family.</text>
</comment>
<gene>
    <name type="primary">COPE</name>
    <name type="synonym">COPE1</name>
</gene>
<reference key="1">
    <citation type="journal article" date="1994" name="J. Cell Biol.">
        <title>En bloc incorporation of coatomer subunits during the assembly of COP-coated vesicles.</title>
        <authorList>
            <person name="Hara-Kuge S."/>
            <person name="Kuge O."/>
            <person name="Orci L."/>
            <person name="Amherdt M."/>
            <person name="Ravazzola M."/>
            <person name="Wieland F."/>
            <person name="Rothman J."/>
        </authorList>
    </citation>
    <scope>NUCLEOTIDE SEQUENCE [MRNA]</scope>
    <scope>PARTIAL PROTEIN SEQUENCE</scope>
    <source>
        <tissue>Liver</tissue>
    </source>
</reference>
<reference key="2">
    <citation type="submission" date="2000-04" db="EMBL/GenBank/DDBJ databases">
        <title>Identification of epsilon-COP genes from various organisms.</title>
        <authorList>
            <person name="Hahn Y."/>
            <person name="Chung J.H."/>
        </authorList>
    </citation>
    <scope>NUCLEOTIDE SEQUENCE [MRNA]</scope>
</reference>
<reference key="3">
    <citation type="journal article" date="2005" name="BMC Genomics">
        <title>Characterization of 954 bovine full-CDS cDNA sequences.</title>
        <authorList>
            <person name="Harhay G.P."/>
            <person name="Sonstegard T.S."/>
            <person name="Keele J.W."/>
            <person name="Heaton M.P."/>
            <person name="Clawson M.L."/>
            <person name="Snelling W.M."/>
            <person name="Wiedmann R.T."/>
            <person name="Van Tassell C.P."/>
            <person name="Smith T.P.L."/>
        </authorList>
    </citation>
    <scope>NUCLEOTIDE SEQUENCE [LARGE SCALE MRNA]</scope>
</reference>
<reference key="4">
    <citation type="submission" date="2005-11" db="EMBL/GenBank/DDBJ databases">
        <authorList>
            <consortium name="NIH - Mammalian Gene Collection (MGC) project"/>
        </authorList>
    </citation>
    <scope>NUCLEOTIDE SEQUENCE [LARGE SCALE MRNA]</scope>
    <source>
        <strain>Crossbred X Angus</strain>
        <tissue>Liver</tissue>
    </source>
</reference>
<keyword id="KW-0002">3D-structure</keyword>
<keyword id="KW-0963">Cytoplasm</keyword>
<keyword id="KW-0968">Cytoplasmic vesicle</keyword>
<keyword id="KW-0903">Direct protein sequencing</keyword>
<keyword id="KW-0931">ER-Golgi transport</keyword>
<keyword id="KW-0333">Golgi apparatus</keyword>
<keyword id="KW-0472">Membrane</keyword>
<keyword id="KW-0597">Phosphoprotein</keyword>
<keyword id="KW-0653">Protein transport</keyword>
<keyword id="KW-1185">Reference proteome</keyword>
<keyword id="KW-0813">Transport</keyword>
<keyword id="KW-0832">Ubl conjugation</keyword>
<organism>
    <name type="scientific">Bos taurus</name>
    <name type="common">Bovine</name>
    <dbReference type="NCBI Taxonomy" id="9913"/>
    <lineage>
        <taxon>Eukaryota</taxon>
        <taxon>Metazoa</taxon>
        <taxon>Chordata</taxon>
        <taxon>Craniata</taxon>
        <taxon>Vertebrata</taxon>
        <taxon>Euteleostomi</taxon>
        <taxon>Mammalia</taxon>
        <taxon>Eutheria</taxon>
        <taxon>Laurasiatheria</taxon>
        <taxon>Artiodactyla</taxon>
        <taxon>Ruminantia</taxon>
        <taxon>Pecora</taxon>
        <taxon>Bovidae</taxon>
        <taxon>Bovinae</taxon>
        <taxon>Bos</taxon>
    </lineage>
</organism>
<sequence>MAPPAPGPASGGSGEVDELFDVKNAFYIGSYQQCINEAQRVKPSSPERDVERDVFLYRAYLAQRKYGVVLDEIKPSSAPELQAVRMFAEYLASDSRRDAIVAELDREMSRSVDVTNTTFLLMAASIYFYDQNPDAALRTLHQGDSLECMAMTVQILLKLDRLDLARKELKKMQDQDEDATLTQLATAWVSLAAGGEKLQDAYYIFQEMADKCSPTLLLLNGQAACHMAQGRWEAAEGVLQEALDKDSGHPETLINLVVLSQHLGKPPEVTNRYLSQLKDAHRSHPFIKEYRAKENDFDRLVLQYAPSA</sequence>
<evidence type="ECO:0000250" key="1"/>
<evidence type="ECO:0000250" key="2">
    <source>
        <dbReference type="UniProtKB" id="O14579"/>
    </source>
</evidence>
<evidence type="ECO:0000305" key="3"/>
<evidence type="ECO:0007829" key="4">
    <source>
        <dbReference type="PDB" id="3MKR"/>
    </source>
</evidence>